<reference key="1">
    <citation type="journal article" date="2004" name="Genome Res.">
        <title>The status, quality, and expansion of the NIH full-length cDNA project: the Mammalian Gene Collection (MGC).</title>
        <authorList>
            <consortium name="The MGC Project Team"/>
        </authorList>
    </citation>
    <scope>NUCLEOTIDE SEQUENCE [LARGE SCALE MRNA]</scope>
    <source>
        <tissue>Liver</tissue>
    </source>
</reference>
<proteinExistence type="evidence at transcript level"/>
<name>MIA40_RAT</name>
<keyword id="KW-1015">Disulfide bond</keyword>
<keyword id="KW-0496">Mitochondrion</keyword>
<keyword id="KW-0560">Oxidoreductase</keyword>
<keyword id="KW-0653">Protein transport</keyword>
<keyword id="KW-0676">Redox-active center</keyword>
<keyword id="KW-1185">Reference proteome</keyword>
<keyword id="KW-0811">Translocation</keyword>
<keyword id="KW-0813">Transport</keyword>
<organism>
    <name type="scientific">Rattus norvegicus</name>
    <name type="common">Rat</name>
    <dbReference type="NCBI Taxonomy" id="10116"/>
    <lineage>
        <taxon>Eukaryota</taxon>
        <taxon>Metazoa</taxon>
        <taxon>Chordata</taxon>
        <taxon>Craniata</taxon>
        <taxon>Vertebrata</taxon>
        <taxon>Euteleostomi</taxon>
        <taxon>Mammalia</taxon>
        <taxon>Eutheria</taxon>
        <taxon>Euarchontoglires</taxon>
        <taxon>Glires</taxon>
        <taxon>Rodentia</taxon>
        <taxon>Myomorpha</taxon>
        <taxon>Muroidea</taxon>
        <taxon>Muridae</taxon>
        <taxon>Murinae</taxon>
        <taxon>Rattus</taxon>
    </lineage>
</organism>
<comment type="function">
    <text evidence="2">Central component of a redox-sensitive mitochondrial intermembrane space import machinery which is required for the biogenesis of respiratory chain complexes. Functions as a chaperone and catalyzes the formation of disulfide bonds in substrate proteins, such as COX17, COX19, MICU1 and COA7. Required for the import and folding of small cysteine-containing proteins (small Tim) in the mitochondrial intermembrane space (IMS). Required for the import of COA7 in the IMS. Precursor proteins to be imported into the IMS are translocated in their reduced form into the mitochondria. The oxidized form of CHCHD4/MIA40 forms a transient intermolecular disulfide bridge with the reduced precursor protein, resulting in oxidation of the precursor protein that now contains an intramolecular disulfide bond and is able to undergo folding in the IMS. Reduced CHCHD4/MIA40 is then reoxidized by GFER/ERV1 via a disulfide relay system. Mediates formation of disulfide bond in MICU1 in the IMS, promoting formation of the MICU1-MICU2 heterodimer that regulates mitochondrial calcium uptake.</text>
</comment>
<comment type="subunit">
    <text evidence="2">Monomer. Can form homooligomers. Interacts with GFER and forms transient disulfide bonds with GFER. Interacts with MICU1. Interacts with COX19 forming transient intermolecular disulfide bridges. Interacts with COA7 through transient intermolecular disulfide bonds. Interacts with AIFM1; the interaction increases in presence of NADH. Interacts with NDUFB10.</text>
</comment>
<comment type="subcellular location">
    <subcellularLocation>
        <location evidence="2">Mitochondrion intermembrane space</location>
    </subcellularLocation>
</comment>
<comment type="domain">
    <text evidence="1">The CHCH domain contains a conserved twin Cys-X(9)-Cys motif which is required for import and stability of MIA40 in mitochondria.</text>
</comment>
<comment type="PTM">
    <text evidence="1">Forms intrachain disulfide bridges, but exists in different redox states.</text>
</comment>
<dbReference type="EMBL" id="BC091407">
    <property type="protein sequence ID" value="AAH91407.1"/>
    <property type="molecule type" value="mRNA"/>
</dbReference>
<dbReference type="RefSeq" id="NP_001013449.1">
    <property type="nucleotide sequence ID" value="NM_001013431.1"/>
</dbReference>
<dbReference type="RefSeq" id="XP_003749131.1">
    <property type="nucleotide sequence ID" value="XM_003749083.3"/>
</dbReference>
<dbReference type="RefSeq" id="XP_003753440.1">
    <property type="nucleotide sequence ID" value="XM_003753392.3"/>
</dbReference>
<dbReference type="SMR" id="Q5BJN5"/>
<dbReference type="FunCoup" id="Q5BJN5">
    <property type="interactions" value="1479"/>
</dbReference>
<dbReference type="STRING" id="10116.ENSRNOP00000038359"/>
<dbReference type="iPTMnet" id="Q5BJN5"/>
<dbReference type="PhosphoSitePlus" id="Q5BJN5"/>
<dbReference type="PaxDb" id="10116-ENSRNOP00000038359"/>
<dbReference type="Ensembl" id="ENSRNOT00000038096.5">
    <property type="protein sequence ID" value="ENSRNOP00000038359.4"/>
    <property type="gene ID" value="ENSRNOG00000022466.5"/>
</dbReference>
<dbReference type="Ensembl" id="ENSRNOT00000116242.1">
    <property type="protein sequence ID" value="ENSRNOP00000094363.1"/>
    <property type="gene ID" value="ENSRNOG00000069157.1"/>
</dbReference>
<dbReference type="GeneID" id="312559"/>
<dbReference type="KEGG" id="rno:312559"/>
<dbReference type="UCSC" id="RGD:1310746">
    <property type="organism name" value="rat"/>
</dbReference>
<dbReference type="AGR" id="RGD:1310746"/>
<dbReference type="CTD" id="131474"/>
<dbReference type="RGD" id="1310746">
    <property type="gene designation" value="Chchd4"/>
</dbReference>
<dbReference type="eggNOG" id="KOG4149">
    <property type="taxonomic scope" value="Eukaryota"/>
</dbReference>
<dbReference type="GeneTree" id="ENSGT00390000013132"/>
<dbReference type="HOGENOM" id="CLU_127296_1_0_1"/>
<dbReference type="InParanoid" id="Q5BJN5"/>
<dbReference type="OMA" id="MECAMRT"/>
<dbReference type="OrthoDB" id="7481291at2759"/>
<dbReference type="PhylomeDB" id="Q5BJN5"/>
<dbReference type="TreeFam" id="TF314054"/>
<dbReference type="PRO" id="PR:Q5BJN5"/>
<dbReference type="Proteomes" id="UP000002494">
    <property type="component" value="Chromosome 1"/>
</dbReference>
<dbReference type="Proteomes" id="UP000002494">
    <property type="component" value="Chromosome 4"/>
</dbReference>
<dbReference type="Bgee" id="ENSRNOG00000022466">
    <property type="expression patterns" value="Expressed in skeletal muscle tissue and 19 other cell types or tissues"/>
</dbReference>
<dbReference type="GO" id="GO:0005758">
    <property type="term" value="C:mitochondrial intermembrane space"/>
    <property type="evidence" value="ECO:0000250"/>
    <property type="project" value="UniProtKB"/>
</dbReference>
<dbReference type="GO" id="GO:0005739">
    <property type="term" value="C:mitochondrion"/>
    <property type="evidence" value="ECO:0000250"/>
    <property type="project" value="UniProtKB"/>
</dbReference>
<dbReference type="GO" id="GO:0015035">
    <property type="term" value="F:protein-disulfide reductase activity"/>
    <property type="evidence" value="ECO:0000250"/>
    <property type="project" value="UniProtKB"/>
</dbReference>
<dbReference type="GO" id="GO:1990830">
    <property type="term" value="P:cellular response to leukemia inhibitory factor"/>
    <property type="evidence" value="ECO:0000266"/>
    <property type="project" value="RGD"/>
</dbReference>
<dbReference type="GO" id="GO:0034599">
    <property type="term" value="P:cellular response to oxidative stress"/>
    <property type="evidence" value="ECO:0000266"/>
    <property type="project" value="RGD"/>
</dbReference>
<dbReference type="GO" id="GO:0072655">
    <property type="term" value="P:establishment of protein localization to mitochondrion"/>
    <property type="evidence" value="ECO:0000266"/>
    <property type="project" value="RGD"/>
</dbReference>
<dbReference type="GO" id="GO:0160203">
    <property type="term" value="P:mitochondrial disulfide relay system"/>
    <property type="evidence" value="ECO:0000250"/>
    <property type="project" value="UniProtKB"/>
</dbReference>
<dbReference type="GO" id="GO:0043504">
    <property type="term" value="P:mitochondrial DNA repair"/>
    <property type="evidence" value="ECO:0000266"/>
    <property type="project" value="RGD"/>
</dbReference>
<dbReference type="GO" id="GO:0033108">
    <property type="term" value="P:mitochondrial respiratory chain complex assembly"/>
    <property type="evidence" value="ECO:0000250"/>
    <property type="project" value="UniProtKB"/>
</dbReference>
<dbReference type="GO" id="GO:1901857">
    <property type="term" value="P:positive regulation of cellular respiration"/>
    <property type="evidence" value="ECO:0000266"/>
    <property type="project" value="RGD"/>
</dbReference>
<dbReference type="GO" id="GO:0045041">
    <property type="term" value="P:protein import into mitochondrial intermembrane space"/>
    <property type="evidence" value="ECO:0000318"/>
    <property type="project" value="GO_Central"/>
</dbReference>
<dbReference type="GO" id="GO:0046825">
    <property type="term" value="P:regulation of protein export from nucleus"/>
    <property type="evidence" value="ECO:0000266"/>
    <property type="project" value="RGD"/>
</dbReference>
<dbReference type="FunFam" id="1.10.287.2900:FF:000001">
    <property type="entry name" value="mitochondrial intermembrane space import and assembly protein 40"/>
    <property type="match status" value="1"/>
</dbReference>
<dbReference type="Gene3D" id="1.10.287.2900">
    <property type="match status" value="1"/>
</dbReference>
<dbReference type="InterPro" id="IPR010625">
    <property type="entry name" value="CHCH"/>
</dbReference>
<dbReference type="InterPro" id="IPR039289">
    <property type="entry name" value="CHCHD4"/>
</dbReference>
<dbReference type="PANTHER" id="PTHR21622">
    <property type="entry name" value="COILED-COIL-HELIX-COILED-COIL-HELIX DOMAIN CONTAINING 4"/>
    <property type="match status" value="1"/>
</dbReference>
<dbReference type="PANTHER" id="PTHR21622:SF8">
    <property type="entry name" value="MITOCHONDRIAL INTERMEMBRANE SPACE IMPORT AND ASSEMBLY PROTEIN 40"/>
    <property type="match status" value="1"/>
</dbReference>
<dbReference type="Pfam" id="PF06747">
    <property type="entry name" value="CHCH"/>
    <property type="match status" value="1"/>
</dbReference>
<dbReference type="PROSITE" id="PS51808">
    <property type="entry name" value="CHCH"/>
    <property type="match status" value="1"/>
</dbReference>
<protein>
    <recommendedName>
        <fullName>Mitochondrial intermembrane space import and assembly protein 40</fullName>
    </recommendedName>
    <alternativeName>
        <fullName>Coiled-coil-helix-coiled-coil-helix domain-containing protein 4</fullName>
    </alternativeName>
</protein>
<gene>
    <name type="primary">Chchd4</name>
    <name type="synonym">Mia40</name>
</gene>
<sequence>MSYCRQEGKDRIIFVTKEDHETPSSAELVADDPNDPYEEHGLILPNGDINWNCPCLGGMASGPCGEQFKSAFSCFHYSTEDIKGSDCIDQFRAMQECMQKYPDLYPQDEEEEEEAKPVEPVEETADTKASAAKEQGASS</sequence>
<accession>Q5BJN5</accession>
<feature type="chain" id="PRO_0000235277" description="Mitochondrial intermembrane space import and assembly protein 40">
    <location>
        <begin position="1"/>
        <end position="139"/>
    </location>
</feature>
<feature type="domain" description="CHCH" evidence="3">
    <location>
        <begin position="61"/>
        <end position="105"/>
    </location>
</feature>
<feature type="region of interest" description="Disordered" evidence="4">
    <location>
        <begin position="104"/>
        <end position="139"/>
    </location>
</feature>
<feature type="short sequence motif" description="Cx9C motif 1" evidence="3">
    <location>
        <begin position="64"/>
        <end position="74"/>
    </location>
</feature>
<feature type="short sequence motif" description="Cx9C motif 2" evidence="3">
    <location>
        <begin position="87"/>
        <end position="97"/>
    </location>
</feature>
<feature type="compositionally biased region" description="Acidic residues" evidence="4">
    <location>
        <begin position="106"/>
        <end position="124"/>
    </location>
</feature>
<feature type="disulfide bond" description="Redox-active" evidence="2">
    <location>
        <begin position="53"/>
        <end position="55"/>
    </location>
</feature>
<feature type="disulfide bond" evidence="3">
    <location>
        <begin position="64"/>
        <end position="97"/>
    </location>
</feature>
<feature type="disulfide bond" evidence="3">
    <location>
        <begin position="74"/>
        <end position="87"/>
    </location>
</feature>
<evidence type="ECO:0000250" key="1"/>
<evidence type="ECO:0000250" key="2">
    <source>
        <dbReference type="UniProtKB" id="Q8N4Q1"/>
    </source>
</evidence>
<evidence type="ECO:0000255" key="3">
    <source>
        <dbReference type="PROSITE-ProRule" id="PRU01150"/>
    </source>
</evidence>
<evidence type="ECO:0000256" key="4">
    <source>
        <dbReference type="SAM" id="MobiDB-lite"/>
    </source>
</evidence>